<name>DNAA_PSEPK</name>
<evidence type="ECO:0000255" key="1">
    <source>
        <dbReference type="HAMAP-Rule" id="MF_00377"/>
    </source>
</evidence>
<evidence type="ECO:0000256" key="2">
    <source>
        <dbReference type="SAM" id="MobiDB-lite"/>
    </source>
</evidence>
<evidence type="ECO:0000269" key="3">
    <source>
    </source>
</evidence>
<evidence type="ECO:0000305" key="4"/>
<proteinExistence type="evidence at protein level"/>
<reference key="1">
    <citation type="journal article" date="2002" name="Environ. Microbiol.">
        <title>Complete genome sequence and comparative analysis of the metabolically versatile Pseudomonas putida KT2440.</title>
        <authorList>
            <person name="Nelson K.E."/>
            <person name="Weinel C."/>
            <person name="Paulsen I.T."/>
            <person name="Dodson R.J."/>
            <person name="Hilbert H."/>
            <person name="Martins dos Santos V.A.P."/>
            <person name="Fouts D.E."/>
            <person name="Gill S.R."/>
            <person name="Pop M."/>
            <person name="Holmes M."/>
            <person name="Brinkac L.M."/>
            <person name="Beanan M.J."/>
            <person name="DeBoy R.T."/>
            <person name="Daugherty S.C."/>
            <person name="Kolonay J.F."/>
            <person name="Madupu R."/>
            <person name="Nelson W.C."/>
            <person name="White O."/>
            <person name="Peterson J.D."/>
            <person name="Khouri H.M."/>
            <person name="Hance I."/>
            <person name="Chris Lee P."/>
            <person name="Holtzapple E.K."/>
            <person name="Scanlan D."/>
            <person name="Tran K."/>
            <person name="Moazzez A."/>
            <person name="Utterback T.R."/>
            <person name="Rizzo M."/>
            <person name="Lee K."/>
            <person name="Kosack D."/>
            <person name="Moestl D."/>
            <person name="Wedler H."/>
            <person name="Lauber J."/>
            <person name="Stjepandic D."/>
            <person name="Hoheisel J."/>
            <person name="Straetz M."/>
            <person name="Heim S."/>
            <person name="Kiewitz C."/>
            <person name="Eisen J.A."/>
            <person name="Timmis K.N."/>
            <person name="Duesterhoeft A."/>
            <person name="Tuemmler B."/>
            <person name="Fraser C.M."/>
        </authorList>
    </citation>
    <scope>NUCLEOTIDE SEQUENCE [LARGE SCALE GENOMIC DNA]</scope>
    <source>
        <strain>ATCC 47054 / DSM 6125 / CFBP 8728 / NCIMB 11950 / KT2440</strain>
    </source>
</reference>
<reference key="2">
    <citation type="journal article" date="2000" name="J. Biol. Chem.">
        <title>Interactions of DnaA proteins from distantly related bacteria with the replication origin of the broad host range plasmid RK2.</title>
        <authorList>
            <person name="Caspi R."/>
            <person name="Helinski D.R."/>
            <person name="Pacek M."/>
            <person name="Konieczny I."/>
        </authorList>
    </citation>
    <scope>FUNCTION IN PLASMID DNA REPLICATION</scope>
    <scope>DNA-BINDING TO ORIV</scope>
    <source>
        <strain>ATCC 47054 / DSM 6125 / CFBP 8728 / NCIMB 11950 / KT2440</strain>
    </source>
</reference>
<feature type="chain" id="PRO_0000114239" description="Chromosomal replication initiator protein DnaA">
    <location>
        <begin position="1"/>
        <end position="506"/>
    </location>
</feature>
<feature type="region of interest" description="Domain I, interacts with DnaA modulators" evidence="1">
    <location>
        <begin position="1"/>
        <end position="87"/>
    </location>
</feature>
<feature type="region of interest" description="Domain II" evidence="1">
    <location>
        <begin position="87"/>
        <end position="169"/>
    </location>
</feature>
<feature type="region of interest" description="Disordered" evidence="2">
    <location>
        <begin position="135"/>
        <end position="154"/>
    </location>
</feature>
<feature type="region of interest" description="Domain III, AAA+ region" evidence="1">
    <location>
        <begin position="170"/>
        <end position="386"/>
    </location>
</feature>
<feature type="region of interest" description="Domain IV, binds dsDNA" evidence="1">
    <location>
        <begin position="387"/>
        <end position="506"/>
    </location>
</feature>
<feature type="compositionally biased region" description="Low complexity" evidence="2">
    <location>
        <begin position="139"/>
        <end position="148"/>
    </location>
</feature>
<feature type="binding site" evidence="1">
    <location>
        <position position="214"/>
    </location>
    <ligand>
        <name>ATP</name>
        <dbReference type="ChEBI" id="CHEBI:30616"/>
    </ligand>
</feature>
<feature type="binding site" evidence="1">
    <location>
        <position position="216"/>
    </location>
    <ligand>
        <name>ATP</name>
        <dbReference type="ChEBI" id="CHEBI:30616"/>
    </ligand>
</feature>
<feature type="binding site" evidence="1">
    <location>
        <position position="217"/>
    </location>
    <ligand>
        <name>ATP</name>
        <dbReference type="ChEBI" id="CHEBI:30616"/>
    </ligand>
</feature>
<feature type="binding site" evidence="1">
    <location>
        <position position="218"/>
    </location>
    <ligand>
        <name>ATP</name>
        <dbReference type="ChEBI" id="CHEBI:30616"/>
    </ligand>
</feature>
<keyword id="KW-0067">ATP-binding</keyword>
<keyword id="KW-0963">Cytoplasm</keyword>
<keyword id="KW-0235">DNA replication</keyword>
<keyword id="KW-0238">DNA-binding</keyword>
<keyword id="KW-0446">Lipid-binding</keyword>
<keyword id="KW-0547">Nucleotide-binding</keyword>
<keyword id="KW-1185">Reference proteome</keyword>
<sequence>MSVELWQQCVELLRDELPAQQFNTWIRPLQVEAEGDELRVYAPNRFVLDWVNEKYLGRLLELLGENGSGIAPALSLLIGSRRSSAPRAAPNAPVSAAVAASLAQTQAHKTAPAAAVEPVAVAAAEPVLVETSSRDSFDAMAEPAAAPPSGGGRAEQRTVQVEGALKHTSYLNRTFTFDTFVEGKSNQLARAAAWQVADNPKHGYNPLFLYGGVGLGKTHLMHAVGNHLLKKNPNAKVVYLHSERFVADMVKALQLNAINEFKRFYRSVDALLIDDIQFFARKERSQEEFFHTFNALLEGGQQVILTSDRYPKEIEGLEERLKSRFGWGLTVAVEPPELETRVAILMKKADQAKVELPHDAAFFIAQRIRSNVRELEGALKRVIAHSHFMGRDITIELIRESLKDLLALQDKLVSVDNIQRTVAEYYKIKISDLLSKRRSRSVARPRQVAMALSKELTNHSLPEIGDMFGGRDHTTVLHACRKINELKESDADIREDYKNLLRTLTT</sequence>
<protein>
    <recommendedName>
        <fullName evidence="1">Chromosomal replication initiator protein DnaA</fullName>
    </recommendedName>
</protein>
<comment type="function">
    <text evidence="1">Plays an essential role in the initiation and regulation of chromosomal replication. ATP-DnaA binds to the origin of replication (oriC) to initiate formation of the DNA replication initiation complex once per cell cycle. Binds the DnaA box (a 9 base pair repeat at the origin) and separates the double-stranded (ds)DNA. Forms a right-handed helical filament on oriC DNA; dsDNA binds to the exterior of the filament while single-stranded (ss)DNA is stabiized in the filament's interior. The ATP-DnaA-oriC complex binds and stabilizes one strand of the AT-rich DNA unwinding element (DUE), permitting loading of DNA polymerase. After initiation quickly degrades to an ADP-DnaA complex that is not apt for DNA replication. Binds acidic phospholipids.</text>
</comment>
<comment type="function">
    <text evidence="3">Non-cooperatively binds DnaA boxes in the minimal plasmid RK2 replication origin (oriV). In vitro in the presence of plasmid RK2-derived TrfA and E.coli protein HU, forms an open complex at oriV. This complex was not however competent for formation of a pre-priming complex with E.coli DnaB and DnaC. Broad host range plasmid RK2 requires not only DnaA for replication but also TrfA and host factors.</text>
</comment>
<comment type="subunit">
    <text evidence="1">Oligomerizes as a right-handed, spiral filament on DNA at oriC.</text>
</comment>
<comment type="subcellular location">
    <subcellularLocation>
        <location evidence="1">Cytoplasm</location>
    </subcellularLocation>
</comment>
<comment type="domain">
    <text evidence="1">Domain I is involved in oligomerization and binding regulators, domain II is flexibile and of varying length in different bacteria, domain III forms the AAA+ region, while domain IV binds dsDNA.</text>
</comment>
<comment type="similarity">
    <text evidence="1 4">Belongs to the DnaA family.</text>
</comment>
<accession>P0A116</accession>
<accession>P13454</accession>
<organism>
    <name type="scientific">Pseudomonas putida (strain ATCC 47054 / DSM 6125 / CFBP 8728 / NCIMB 11950 / KT2440)</name>
    <dbReference type="NCBI Taxonomy" id="160488"/>
    <lineage>
        <taxon>Bacteria</taxon>
        <taxon>Pseudomonadati</taxon>
        <taxon>Pseudomonadota</taxon>
        <taxon>Gammaproteobacteria</taxon>
        <taxon>Pseudomonadales</taxon>
        <taxon>Pseudomonadaceae</taxon>
        <taxon>Pseudomonas</taxon>
    </lineage>
</organism>
<dbReference type="EMBL" id="AE015451">
    <property type="protein sequence ID" value="AAN65644.1"/>
    <property type="molecule type" value="Genomic_DNA"/>
</dbReference>
<dbReference type="RefSeq" id="NP_742180.1">
    <property type="nucleotide sequence ID" value="NC_002947.4"/>
</dbReference>
<dbReference type="RefSeq" id="WP_010951427.1">
    <property type="nucleotide sequence ID" value="NZ_CP169744.1"/>
</dbReference>
<dbReference type="SMR" id="P0A116"/>
<dbReference type="STRING" id="160488.PP_0010"/>
<dbReference type="PaxDb" id="160488-PP_0010"/>
<dbReference type="GeneID" id="83677290"/>
<dbReference type="KEGG" id="ppu:PP_0010"/>
<dbReference type="PATRIC" id="fig|160488.4.peg.10"/>
<dbReference type="eggNOG" id="COG0593">
    <property type="taxonomic scope" value="Bacteria"/>
</dbReference>
<dbReference type="HOGENOM" id="CLU_026910_0_1_6"/>
<dbReference type="OrthoDB" id="9807019at2"/>
<dbReference type="PhylomeDB" id="P0A116"/>
<dbReference type="BioCyc" id="PPUT160488:G1G01-10-MONOMER"/>
<dbReference type="Proteomes" id="UP000000556">
    <property type="component" value="Chromosome"/>
</dbReference>
<dbReference type="GO" id="GO:0005737">
    <property type="term" value="C:cytoplasm"/>
    <property type="evidence" value="ECO:0007669"/>
    <property type="project" value="UniProtKB-SubCell"/>
</dbReference>
<dbReference type="GO" id="GO:0005886">
    <property type="term" value="C:plasma membrane"/>
    <property type="evidence" value="ECO:0007669"/>
    <property type="project" value="TreeGrafter"/>
</dbReference>
<dbReference type="GO" id="GO:0005524">
    <property type="term" value="F:ATP binding"/>
    <property type="evidence" value="ECO:0007669"/>
    <property type="project" value="UniProtKB-UniRule"/>
</dbReference>
<dbReference type="GO" id="GO:0016887">
    <property type="term" value="F:ATP hydrolysis activity"/>
    <property type="evidence" value="ECO:0007669"/>
    <property type="project" value="InterPro"/>
</dbReference>
<dbReference type="GO" id="GO:0003688">
    <property type="term" value="F:DNA replication origin binding"/>
    <property type="evidence" value="ECO:0007669"/>
    <property type="project" value="UniProtKB-UniRule"/>
</dbReference>
<dbReference type="GO" id="GO:0008289">
    <property type="term" value="F:lipid binding"/>
    <property type="evidence" value="ECO:0007669"/>
    <property type="project" value="UniProtKB-KW"/>
</dbReference>
<dbReference type="GO" id="GO:0006270">
    <property type="term" value="P:DNA replication initiation"/>
    <property type="evidence" value="ECO:0007669"/>
    <property type="project" value="UniProtKB-UniRule"/>
</dbReference>
<dbReference type="GO" id="GO:0006275">
    <property type="term" value="P:regulation of DNA replication"/>
    <property type="evidence" value="ECO:0007669"/>
    <property type="project" value="UniProtKB-UniRule"/>
</dbReference>
<dbReference type="CDD" id="cd00009">
    <property type="entry name" value="AAA"/>
    <property type="match status" value="1"/>
</dbReference>
<dbReference type="CDD" id="cd06571">
    <property type="entry name" value="Bac_DnaA_C"/>
    <property type="match status" value="1"/>
</dbReference>
<dbReference type="FunFam" id="1.10.1750.10:FF:000001">
    <property type="entry name" value="Chromosomal replication initiator protein DnaA"/>
    <property type="match status" value="1"/>
</dbReference>
<dbReference type="FunFam" id="1.10.8.60:FF:000003">
    <property type="entry name" value="Chromosomal replication initiator protein DnaA"/>
    <property type="match status" value="1"/>
</dbReference>
<dbReference type="FunFam" id="3.40.50.300:FF:000103">
    <property type="entry name" value="Chromosomal replication initiator protein DnaA"/>
    <property type="match status" value="1"/>
</dbReference>
<dbReference type="Gene3D" id="1.10.1750.10">
    <property type="match status" value="1"/>
</dbReference>
<dbReference type="Gene3D" id="1.10.8.60">
    <property type="match status" value="1"/>
</dbReference>
<dbReference type="Gene3D" id="3.30.300.180">
    <property type="match status" value="1"/>
</dbReference>
<dbReference type="Gene3D" id="3.40.50.300">
    <property type="entry name" value="P-loop containing nucleotide triphosphate hydrolases"/>
    <property type="match status" value="1"/>
</dbReference>
<dbReference type="HAMAP" id="MF_00377">
    <property type="entry name" value="DnaA_bact"/>
    <property type="match status" value="1"/>
</dbReference>
<dbReference type="InterPro" id="IPR003593">
    <property type="entry name" value="AAA+_ATPase"/>
</dbReference>
<dbReference type="InterPro" id="IPR001957">
    <property type="entry name" value="Chromosome_initiator_DnaA"/>
</dbReference>
<dbReference type="InterPro" id="IPR020591">
    <property type="entry name" value="Chromosome_initiator_DnaA-like"/>
</dbReference>
<dbReference type="InterPro" id="IPR018312">
    <property type="entry name" value="Chromosome_initiator_DnaA_CS"/>
</dbReference>
<dbReference type="InterPro" id="IPR013159">
    <property type="entry name" value="DnaA_C"/>
</dbReference>
<dbReference type="InterPro" id="IPR013317">
    <property type="entry name" value="DnaA_dom"/>
</dbReference>
<dbReference type="InterPro" id="IPR024633">
    <property type="entry name" value="DnaA_N_dom"/>
</dbReference>
<dbReference type="InterPro" id="IPR038454">
    <property type="entry name" value="DnaA_N_sf"/>
</dbReference>
<dbReference type="InterPro" id="IPR027417">
    <property type="entry name" value="P-loop_NTPase"/>
</dbReference>
<dbReference type="InterPro" id="IPR010921">
    <property type="entry name" value="Trp_repressor/repl_initiator"/>
</dbReference>
<dbReference type="NCBIfam" id="TIGR00362">
    <property type="entry name" value="DnaA"/>
    <property type="match status" value="1"/>
</dbReference>
<dbReference type="PANTHER" id="PTHR30050">
    <property type="entry name" value="CHROMOSOMAL REPLICATION INITIATOR PROTEIN DNAA"/>
    <property type="match status" value="1"/>
</dbReference>
<dbReference type="PANTHER" id="PTHR30050:SF2">
    <property type="entry name" value="CHROMOSOMAL REPLICATION INITIATOR PROTEIN DNAA"/>
    <property type="match status" value="1"/>
</dbReference>
<dbReference type="Pfam" id="PF00308">
    <property type="entry name" value="Bac_DnaA"/>
    <property type="match status" value="1"/>
</dbReference>
<dbReference type="Pfam" id="PF08299">
    <property type="entry name" value="Bac_DnaA_C"/>
    <property type="match status" value="1"/>
</dbReference>
<dbReference type="Pfam" id="PF11638">
    <property type="entry name" value="DnaA_N"/>
    <property type="match status" value="1"/>
</dbReference>
<dbReference type="PRINTS" id="PR00051">
    <property type="entry name" value="DNAA"/>
</dbReference>
<dbReference type="SMART" id="SM00382">
    <property type="entry name" value="AAA"/>
    <property type="match status" value="1"/>
</dbReference>
<dbReference type="SMART" id="SM00760">
    <property type="entry name" value="Bac_DnaA_C"/>
    <property type="match status" value="1"/>
</dbReference>
<dbReference type="SUPFAM" id="SSF52540">
    <property type="entry name" value="P-loop containing nucleoside triphosphate hydrolases"/>
    <property type="match status" value="1"/>
</dbReference>
<dbReference type="SUPFAM" id="SSF48295">
    <property type="entry name" value="TrpR-like"/>
    <property type="match status" value="1"/>
</dbReference>
<dbReference type="PROSITE" id="PS01008">
    <property type="entry name" value="DNAA"/>
    <property type="match status" value="1"/>
</dbReference>
<gene>
    <name evidence="1" type="primary">dnaA</name>
    <name type="ordered locus">PP_0010</name>
</gene>